<name>AROE_NITMU</name>
<dbReference type="EC" id="1.1.1.25" evidence="1"/>
<dbReference type="EMBL" id="CP000103">
    <property type="protein sequence ID" value="ABB73846.1"/>
    <property type="status" value="ALT_INIT"/>
    <property type="molecule type" value="Genomic_DNA"/>
</dbReference>
<dbReference type="RefSeq" id="WP_041352350.1">
    <property type="nucleotide sequence ID" value="NC_007614.1"/>
</dbReference>
<dbReference type="SMR" id="Q2YBM5"/>
<dbReference type="STRING" id="323848.Nmul_A0538"/>
<dbReference type="KEGG" id="nmu:Nmul_A0538"/>
<dbReference type="eggNOG" id="COG0169">
    <property type="taxonomic scope" value="Bacteria"/>
</dbReference>
<dbReference type="HOGENOM" id="CLU_044063_2_1_4"/>
<dbReference type="OrthoDB" id="9776868at2"/>
<dbReference type="UniPathway" id="UPA00053">
    <property type="reaction ID" value="UER00087"/>
</dbReference>
<dbReference type="Proteomes" id="UP000002718">
    <property type="component" value="Chromosome"/>
</dbReference>
<dbReference type="GO" id="GO:0005829">
    <property type="term" value="C:cytosol"/>
    <property type="evidence" value="ECO:0007669"/>
    <property type="project" value="TreeGrafter"/>
</dbReference>
<dbReference type="GO" id="GO:0050661">
    <property type="term" value="F:NADP binding"/>
    <property type="evidence" value="ECO:0007669"/>
    <property type="project" value="InterPro"/>
</dbReference>
<dbReference type="GO" id="GO:0004764">
    <property type="term" value="F:shikimate 3-dehydrogenase (NADP+) activity"/>
    <property type="evidence" value="ECO:0007669"/>
    <property type="project" value="UniProtKB-UniRule"/>
</dbReference>
<dbReference type="GO" id="GO:0008652">
    <property type="term" value="P:amino acid biosynthetic process"/>
    <property type="evidence" value="ECO:0007669"/>
    <property type="project" value="UniProtKB-KW"/>
</dbReference>
<dbReference type="GO" id="GO:0009073">
    <property type="term" value="P:aromatic amino acid family biosynthetic process"/>
    <property type="evidence" value="ECO:0007669"/>
    <property type="project" value="UniProtKB-KW"/>
</dbReference>
<dbReference type="GO" id="GO:0009423">
    <property type="term" value="P:chorismate biosynthetic process"/>
    <property type="evidence" value="ECO:0007669"/>
    <property type="project" value="UniProtKB-UniRule"/>
</dbReference>
<dbReference type="GO" id="GO:0019632">
    <property type="term" value="P:shikimate metabolic process"/>
    <property type="evidence" value="ECO:0007669"/>
    <property type="project" value="InterPro"/>
</dbReference>
<dbReference type="CDD" id="cd01065">
    <property type="entry name" value="NAD_bind_Shikimate_DH"/>
    <property type="match status" value="1"/>
</dbReference>
<dbReference type="FunFam" id="3.40.50.10860:FF:000006">
    <property type="entry name" value="Shikimate dehydrogenase (NADP(+))"/>
    <property type="match status" value="1"/>
</dbReference>
<dbReference type="FunFam" id="3.40.50.720:FF:000104">
    <property type="entry name" value="Shikimate dehydrogenase (NADP(+))"/>
    <property type="match status" value="1"/>
</dbReference>
<dbReference type="Gene3D" id="3.40.50.10860">
    <property type="entry name" value="Leucine Dehydrogenase, chain A, domain 1"/>
    <property type="match status" value="1"/>
</dbReference>
<dbReference type="Gene3D" id="3.40.50.720">
    <property type="entry name" value="NAD(P)-binding Rossmann-like Domain"/>
    <property type="match status" value="1"/>
</dbReference>
<dbReference type="HAMAP" id="MF_00222">
    <property type="entry name" value="Shikimate_DH_AroE"/>
    <property type="match status" value="1"/>
</dbReference>
<dbReference type="InterPro" id="IPR046346">
    <property type="entry name" value="Aminoacid_DH-like_N_sf"/>
</dbReference>
<dbReference type="InterPro" id="IPR036291">
    <property type="entry name" value="NAD(P)-bd_dom_sf"/>
</dbReference>
<dbReference type="InterPro" id="IPR041121">
    <property type="entry name" value="SDH_C"/>
</dbReference>
<dbReference type="InterPro" id="IPR011342">
    <property type="entry name" value="Shikimate_DH"/>
</dbReference>
<dbReference type="InterPro" id="IPR013708">
    <property type="entry name" value="Shikimate_DH-bd_N"/>
</dbReference>
<dbReference type="InterPro" id="IPR022893">
    <property type="entry name" value="Shikimate_DH_fam"/>
</dbReference>
<dbReference type="InterPro" id="IPR006151">
    <property type="entry name" value="Shikm_DH/Glu-tRNA_Rdtase"/>
</dbReference>
<dbReference type="NCBIfam" id="TIGR00507">
    <property type="entry name" value="aroE"/>
    <property type="match status" value="1"/>
</dbReference>
<dbReference type="NCBIfam" id="NF001310">
    <property type="entry name" value="PRK00258.1-2"/>
    <property type="match status" value="1"/>
</dbReference>
<dbReference type="PANTHER" id="PTHR21089:SF1">
    <property type="entry name" value="BIFUNCTIONAL 3-DEHYDROQUINATE DEHYDRATASE_SHIKIMATE DEHYDROGENASE, CHLOROPLASTIC"/>
    <property type="match status" value="1"/>
</dbReference>
<dbReference type="PANTHER" id="PTHR21089">
    <property type="entry name" value="SHIKIMATE DEHYDROGENASE"/>
    <property type="match status" value="1"/>
</dbReference>
<dbReference type="Pfam" id="PF18317">
    <property type="entry name" value="SDH_C"/>
    <property type="match status" value="1"/>
</dbReference>
<dbReference type="Pfam" id="PF01488">
    <property type="entry name" value="Shikimate_DH"/>
    <property type="match status" value="1"/>
</dbReference>
<dbReference type="Pfam" id="PF08501">
    <property type="entry name" value="Shikimate_dh_N"/>
    <property type="match status" value="1"/>
</dbReference>
<dbReference type="SUPFAM" id="SSF53223">
    <property type="entry name" value="Aminoacid dehydrogenase-like, N-terminal domain"/>
    <property type="match status" value="1"/>
</dbReference>
<dbReference type="SUPFAM" id="SSF51735">
    <property type="entry name" value="NAD(P)-binding Rossmann-fold domains"/>
    <property type="match status" value="1"/>
</dbReference>
<reference key="1">
    <citation type="submission" date="2005-08" db="EMBL/GenBank/DDBJ databases">
        <title>Complete sequence of chromosome 1 of Nitrosospira multiformis ATCC 25196.</title>
        <authorList>
            <person name="Copeland A."/>
            <person name="Lucas S."/>
            <person name="Lapidus A."/>
            <person name="Barry K."/>
            <person name="Detter J.C."/>
            <person name="Glavina T."/>
            <person name="Hammon N."/>
            <person name="Israni S."/>
            <person name="Pitluck S."/>
            <person name="Chain P."/>
            <person name="Malfatti S."/>
            <person name="Shin M."/>
            <person name="Vergez L."/>
            <person name="Schmutz J."/>
            <person name="Larimer F."/>
            <person name="Land M."/>
            <person name="Hauser L."/>
            <person name="Kyrpides N."/>
            <person name="Lykidis A."/>
            <person name="Richardson P."/>
        </authorList>
    </citation>
    <scope>NUCLEOTIDE SEQUENCE [LARGE SCALE GENOMIC DNA]</scope>
    <source>
        <strain>ATCC 25196 / NCIMB 11849 / C 71</strain>
    </source>
</reference>
<gene>
    <name evidence="1" type="primary">aroE</name>
    <name type="ordered locus">Nmul_A0538</name>
</gene>
<accession>Q2YBM5</accession>
<protein>
    <recommendedName>
        <fullName evidence="1">Shikimate dehydrogenase (NADP(+))</fullName>
        <shortName evidence="1">SDH</shortName>
        <ecNumber evidence="1">1.1.1.25</ecNumber>
    </recommendedName>
</protein>
<evidence type="ECO:0000255" key="1">
    <source>
        <dbReference type="HAMAP-Rule" id="MF_00222"/>
    </source>
</evidence>
<evidence type="ECO:0000305" key="2"/>
<keyword id="KW-0028">Amino-acid biosynthesis</keyword>
<keyword id="KW-0057">Aromatic amino acid biosynthesis</keyword>
<keyword id="KW-0521">NADP</keyword>
<keyword id="KW-0560">Oxidoreductase</keyword>
<keyword id="KW-1185">Reference proteome</keyword>
<proteinExistence type="inferred from homology"/>
<comment type="function">
    <text evidence="1">Involved in the biosynthesis of the chorismate, which leads to the biosynthesis of aromatic amino acids. Catalyzes the reversible NADPH linked reduction of 3-dehydroshikimate (DHSA) to yield shikimate (SA).</text>
</comment>
<comment type="catalytic activity">
    <reaction evidence="1">
        <text>shikimate + NADP(+) = 3-dehydroshikimate + NADPH + H(+)</text>
        <dbReference type="Rhea" id="RHEA:17737"/>
        <dbReference type="ChEBI" id="CHEBI:15378"/>
        <dbReference type="ChEBI" id="CHEBI:16630"/>
        <dbReference type="ChEBI" id="CHEBI:36208"/>
        <dbReference type="ChEBI" id="CHEBI:57783"/>
        <dbReference type="ChEBI" id="CHEBI:58349"/>
        <dbReference type="EC" id="1.1.1.25"/>
    </reaction>
</comment>
<comment type="pathway">
    <text evidence="1">Metabolic intermediate biosynthesis; chorismate biosynthesis; chorismate from D-erythrose 4-phosphate and phosphoenolpyruvate: step 4/7.</text>
</comment>
<comment type="subunit">
    <text evidence="1">Homodimer.</text>
</comment>
<comment type="similarity">
    <text evidence="1">Belongs to the shikimate dehydrogenase family.</text>
</comment>
<comment type="sequence caution" evidence="2">
    <conflict type="erroneous initiation">
        <sequence resource="EMBL-CDS" id="ABB73846"/>
    </conflict>
    <text>Extended N-terminus.</text>
</comment>
<sequence length="275" mass="28997">MSDLYAVIGNPVAHSKSPLIHAGFARQSGQDVRYEAILAPLDGFVETVAAFRQRGGKGANVTVPFKLEAHTLSSCLTERAKAAGAVNTLVFGADDILGDNTDGAGLVRDVAVNLGYALDDRRVLLMGAGGAARGVIRPLLEHEPAALVIANRTPQKADDLQRLFASSGNVLSAAYEDLRGQEFDLVINATSASLQGDLPPLPKGIFAGASLAYDMMYGKGLTSFLQFAQQQGAARLADGIGMLVEQAAESFFLWRGIRPETEPVIGMLRSSLGSP</sequence>
<organism>
    <name type="scientific">Nitrosospira multiformis (strain ATCC 25196 / NCIMB 11849 / C 71)</name>
    <dbReference type="NCBI Taxonomy" id="323848"/>
    <lineage>
        <taxon>Bacteria</taxon>
        <taxon>Pseudomonadati</taxon>
        <taxon>Pseudomonadota</taxon>
        <taxon>Betaproteobacteria</taxon>
        <taxon>Nitrosomonadales</taxon>
        <taxon>Nitrosomonadaceae</taxon>
        <taxon>Nitrosospira</taxon>
    </lineage>
</organism>
<feature type="chain" id="PRO_0000325140" description="Shikimate dehydrogenase (NADP(+))">
    <location>
        <begin position="1"/>
        <end position="275"/>
    </location>
</feature>
<feature type="active site" description="Proton acceptor" evidence="1">
    <location>
        <position position="66"/>
    </location>
</feature>
<feature type="binding site" evidence="1">
    <location>
        <begin position="15"/>
        <end position="17"/>
    </location>
    <ligand>
        <name>shikimate</name>
        <dbReference type="ChEBI" id="CHEBI:36208"/>
    </ligand>
</feature>
<feature type="binding site" evidence="1">
    <location>
        <position position="62"/>
    </location>
    <ligand>
        <name>shikimate</name>
        <dbReference type="ChEBI" id="CHEBI:36208"/>
    </ligand>
</feature>
<feature type="binding site" evidence="1">
    <location>
        <position position="78"/>
    </location>
    <ligand>
        <name>NADP(+)</name>
        <dbReference type="ChEBI" id="CHEBI:58349"/>
    </ligand>
</feature>
<feature type="binding site" evidence="1">
    <location>
        <position position="87"/>
    </location>
    <ligand>
        <name>shikimate</name>
        <dbReference type="ChEBI" id="CHEBI:36208"/>
    </ligand>
</feature>
<feature type="binding site" evidence="1">
    <location>
        <position position="102"/>
    </location>
    <ligand>
        <name>shikimate</name>
        <dbReference type="ChEBI" id="CHEBI:36208"/>
    </ligand>
</feature>
<feature type="binding site" evidence="1">
    <location>
        <begin position="127"/>
        <end position="131"/>
    </location>
    <ligand>
        <name>NADP(+)</name>
        <dbReference type="ChEBI" id="CHEBI:58349"/>
    </ligand>
</feature>
<feature type="binding site" evidence="1">
    <location>
        <begin position="151"/>
        <end position="156"/>
    </location>
    <ligand>
        <name>NADP(+)</name>
        <dbReference type="ChEBI" id="CHEBI:58349"/>
    </ligand>
</feature>
<feature type="binding site" evidence="1">
    <location>
        <position position="215"/>
    </location>
    <ligand>
        <name>NADP(+)</name>
        <dbReference type="ChEBI" id="CHEBI:58349"/>
    </ligand>
</feature>
<feature type="binding site" evidence="1">
    <location>
        <position position="217"/>
    </location>
    <ligand>
        <name>shikimate</name>
        <dbReference type="ChEBI" id="CHEBI:36208"/>
    </ligand>
</feature>
<feature type="binding site" evidence="1">
    <location>
        <position position="239"/>
    </location>
    <ligand>
        <name>NADP(+)</name>
        <dbReference type="ChEBI" id="CHEBI:58349"/>
    </ligand>
</feature>